<evidence type="ECO:0000255" key="1">
    <source>
        <dbReference type="HAMAP-Rule" id="MF_01532"/>
    </source>
</evidence>
<evidence type="ECO:0000305" key="2"/>
<protein>
    <recommendedName>
        <fullName evidence="1">L-rhamnose-proton symporter</fullName>
    </recommendedName>
    <alternativeName>
        <fullName evidence="1">L-rhamnose-H(+) transport protein</fullName>
    </alternativeName>
</protein>
<name>RHAT_ECO57</name>
<dbReference type="EMBL" id="AE005174">
    <property type="protein sequence ID" value="AAG59101.1"/>
    <property type="status" value="ALT_SEQ"/>
    <property type="molecule type" value="Genomic_DNA"/>
</dbReference>
<dbReference type="EMBL" id="BA000007">
    <property type="status" value="NOT_ANNOTATED_CDS"/>
    <property type="molecule type" value="Genomic_DNA"/>
</dbReference>
<dbReference type="PIR" id="A86080">
    <property type="entry name" value="A86080"/>
</dbReference>
<dbReference type="STRING" id="155864.Z5452"/>
<dbReference type="KEGG" id="ece:Z5452"/>
<dbReference type="eggNOG" id="ENOG502Z7ID">
    <property type="taxonomic scope" value="Bacteria"/>
</dbReference>
<dbReference type="OMA" id="QFFFYGM"/>
<dbReference type="Proteomes" id="UP000000558">
    <property type="component" value="Chromosome"/>
</dbReference>
<dbReference type="Proteomes" id="UP000002519">
    <property type="component" value="Chromosome"/>
</dbReference>
<dbReference type="GO" id="GO:0005886">
    <property type="term" value="C:plasma membrane"/>
    <property type="evidence" value="ECO:0007669"/>
    <property type="project" value="UniProtKB-SubCell"/>
</dbReference>
<dbReference type="GO" id="GO:0015153">
    <property type="term" value="F:rhamnose transmembrane transporter activity"/>
    <property type="evidence" value="ECO:0007669"/>
    <property type="project" value="UniProtKB-UniRule"/>
</dbReference>
<dbReference type="GO" id="GO:0015293">
    <property type="term" value="F:symporter activity"/>
    <property type="evidence" value="ECO:0007669"/>
    <property type="project" value="UniProtKB-KW"/>
</dbReference>
<dbReference type="HAMAP" id="MF_01532">
    <property type="entry name" value="RhaT"/>
    <property type="match status" value="1"/>
</dbReference>
<dbReference type="InterPro" id="IPR004673">
    <property type="entry name" value="L-rhamnose-proton_sym_RhaT"/>
</dbReference>
<dbReference type="NCBIfam" id="NF010021">
    <property type="entry name" value="PRK13499.1-1"/>
    <property type="match status" value="1"/>
</dbReference>
<dbReference type="NCBIfam" id="NF010023">
    <property type="entry name" value="PRK13499.1-3"/>
    <property type="match status" value="1"/>
</dbReference>
<dbReference type="NCBIfam" id="TIGR00776">
    <property type="entry name" value="RhaT"/>
    <property type="match status" value="1"/>
</dbReference>
<dbReference type="Pfam" id="PF06379">
    <property type="entry name" value="RhaT"/>
    <property type="match status" value="1"/>
</dbReference>
<feature type="chain" id="PRO_0000208273" description="L-rhamnose-proton symporter">
    <location>
        <begin position="1"/>
        <end position="344"/>
    </location>
</feature>
<feature type="transmembrane region" description="Helical" evidence="1">
    <location>
        <begin position="4"/>
        <end position="24"/>
    </location>
</feature>
<feature type="transmembrane region" description="Helical" evidence="1">
    <location>
        <begin position="38"/>
        <end position="58"/>
    </location>
</feature>
<feature type="transmembrane region" description="Helical" evidence="1">
    <location>
        <begin position="68"/>
        <end position="88"/>
    </location>
</feature>
<feature type="transmembrane region" description="Helical" evidence="1">
    <location>
        <begin position="101"/>
        <end position="121"/>
    </location>
</feature>
<feature type="transmembrane region" description="Helical" evidence="1">
    <location>
        <begin position="137"/>
        <end position="157"/>
    </location>
</feature>
<feature type="transmembrane region" description="Helical" evidence="1">
    <location>
        <begin position="175"/>
        <end position="195"/>
    </location>
</feature>
<feature type="transmembrane region" description="Helical" evidence="1">
    <location>
        <begin position="214"/>
        <end position="234"/>
    </location>
</feature>
<feature type="transmembrane region" description="Helical" evidence="1">
    <location>
        <begin position="259"/>
        <end position="279"/>
    </location>
</feature>
<feature type="transmembrane region" description="Helical" evidence="1">
    <location>
        <begin position="290"/>
        <end position="310"/>
    </location>
</feature>
<feature type="transmembrane region" description="Helical" evidence="1">
    <location>
        <begin position="323"/>
        <end position="343"/>
    </location>
</feature>
<keyword id="KW-0997">Cell inner membrane</keyword>
<keyword id="KW-1003">Cell membrane</keyword>
<keyword id="KW-0472">Membrane</keyword>
<keyword id="KW-1185">Reference proteome</keyword>
<keyword id="KW-0762">Sugar transport</keyword>
<keyword id="KW-0769">Symport</keyword>
<keyword id="KW-0812">Transmembrane</keyword>
<keyword id="KW-1133">Transmembrane helix</keyword>
<keyword id="KW-0813">Transport</keyword>
<gene>
    <name evidence="1" type="primary">rhaT</name>
    <name type="ordered locus">Z5452</name>
    <name type="ordered locus">ECs4833.1</name>
</gene>
<comment type="function">
    <text evidence="1">Uptake of L-rhamnose across the cytoplasmic membrane with the concomitant transport of protons into the cell (symport system).</text>
</comment>
<comment type="catalytic activity">
    <reaction evidence="1">
        <text>L-rhamnopyranose(in) + H(+)(in) = L-rhamnopyranose(out) + H(+)(out)</text>
        <dbReference type="Rhea" id="RHEA:29947"/>
        <dbReference type="ChEBI" id="CHEBI:15378"/>
        <dbReference type="ChEBI" id="CHEBI:62346"/>
    </reaction>
    <physiologicalReaction direction="right-to-left" evidence="1">
        <dbReference type="Rhea" id="RHEA:29949"/>
    </physiologicalReaction>
</comment>
<comment type="subcellular location">
    <subcellularLocation>
        <location evidence="1">Cell inner membrane</location>
        <topology evidence="1">Multi-pass membrane protein</topology>
    </subcellularLocation>
</comment>
<comment type="similarity">
    <text evidence="1">Belongs to the L-rhamnose transporter (TC 2.A.7.6) family.</text>
</comment>
<comment type="sequence caution" evidence="2">
    <conflict type="erroneous termination">
        <sequence resource="EMBL-CDS" id="AAG59101"/>
    </conflict>
    <text>Truncated C-terminus.</text>
</comment>
<comment type="sequence caution" evidence="2">
    <conflict type="erroneous termination">
        <sequence resource="EMBL" id="BA000007"/>
    </conflict>
    <text>Truncated C-terminus.</text>
</comment>
<sequence>MSNAITMGIFWHLIGAASAACFYAPFKKVKKWSWETMWSVGGIVSWIILPWAISALLLPNFWAYYSSFSLSTLLPVFLFGAMWGIGNINYGLTMRYLGMSMGIGIAIGITLIVGTLMTPIINGNFDVLINTEGGRMTLLGVLVALIGVGIVTRAGQLKERKMGIKAEEFNLKKGLVLAVMCGIFSAGMSFAMNAAKPMHEAAAALGVDPLYVALPSYVVIMGGGAIINLGFCFIRLAKVKDLSLKADFSLAKPLIIHNVLLSALGGLMWYLQFFFYAWGHARIPAQYDYISWMLHMSFYVLCGGIVGLVLKEWNNAGRRPVTVLSLGCVVIIVAANIVGMGMAN</sequence>
<reference key="1">
    <citation type="journal article" date="2001" name="Nature">
        <title>Genome sequence of enterohaemorrhagic Escherichia coli O157:H7.</title>
        <authorList>
            <person name="Perna N.T."/>
            <person name="Plunkett G. III"/>
            <person name="Burland V."/>
            <person name="Mau B."/>
            <person name="Glasner J.D."/>
            <person name="Rose D.J."/>
            <person name="Mayhew G.F."/>
            <person name="Evans P.S."/>
            <person name="Gregor J."/>
            <person name="Kirkpatrick H.A."/>
            <person name="Posfai G."/>
            <person name="Hackett J."/>
            <person name="Klink S."/>
            <person name="Boutin A."/>
            <person name="Shao Y."/>
            <person name="Miller L."/>
            <person name="Grotbeck E.J."/>
            <person name="Davis N.W."/>
            <person name="Lim A."/>
            <person name="Dimalanta E.T."/>
            <person name="Potamousis K."/>
            <person name="Apodaca J."/>
            <person name="Anantharaman T.S."/>
            <person name="Lin J."/>
            <person name="Yen G."/>
            <person name="Schwartz D.C."/>
            <person name="Welch R.A."/>
            <person name="Blattner F.R."/>
        </authorList>
    </citation>
    <scope>NUCLEOTIDE SEQUENCE [LARGE SCALE GENOMIC DNA]</scope>
    <source>
        <strain>O157:H7 / EDL933 / ATCC 700927 / EHEC</strain>
    </source>
</reference>
<reference key="2">
    <citation type="journal article" date="2001" name="DNA Res.">
        <title>Complete genome sequence of enterohemorrhagic Escherichia coli O157:H7 and genomic comparison with a laboratory strain K-12.</title>
        <authorList>
            <person name="Hayashi T."/>
            <person name="Makino K."/>
            <person name="Ohnishi M."/>
            <person name="Kurokawa K."/>
            <person name="Ishii K."/>
            <person name="Yokoyama K."/>
            <person name="Han C.-G."/>
            <person name="Ohtsubo E."/>
            <person name="Nakayama K."/>
            <person name="Murata T."/>
            <person name="Tanaka M."/>
            <person name="Tobe T."/>
            <person name="Iida T."/>
            <person name="Takami H."/>
            <person name="Honda T."/>
            <person name="Sasakawa C."/>
            <person name="Ogasawara N."/>
            <person name="Yasunaga T."/>
            <person name="Kuhara S."/>
            <person name="Shiba T."/>
            <person name="Hattori M."/>
            <person name="Shinagawa H."/>
        </authorList>
    </citation>
    <scope>NUCLEOTIDE SEQUENCE [LARGE SCALE GENOMIC DNA]</scope>
    <source>
        <strain>O157:H7 / Sakai / RIMD 0509952 / EHEC</strain>
    </source>
</reference>
<proteinExistence type="inferred from homology"/>
<organism>
    <name type="scientific">Escherichia coli O157:H7</name>
    <dbReference type="NCBI Taxonomy" id="83334"/>
    <lineage>
        <taxon>Bacteria</taxon>
        <taxon>Pseudomonadati</taxon>
        <taxon>Pseudomonadota</taxon>
        <taxon>Gammaproteobacteria</taxon>
        <taxon>Enterobacterales</taxon>
        <taxon>Enterobacteriaceae</taxon>
        <taxon>Escherichia</taxon>
    </lineage>
</organism>
<accession>Q8X3T0</accession>